<evidence type="ECO:0000250" key="1">
    <source>
        <dbReference type="UniProtKB" id="D0VWU3"/>
    </source>
</evidence>
<evidence type="ECO:0000250" key="2">
    <source>
        <dbReference type="UniProtKB" id="Q70KY3"/>
    </source>
</evidence>
<evidence type="ECO:0000255" key="3"/>
<evidence type="ECO:0000255" key="4">
    <source>
        <dbReference type="PROSITE-ProRule" id="PRU00498"/>
    </source>
</evidence>
<evidence type="ECO:0000256" key="5">
    <source>
        <dbReference type="SAM" id="MobiDB-lite"/>
    </source>
</evidence>
<evidence type="ECO:0000269" key="6">
    <source>
    </source>
</evidence>
<evidence type="ECO:0000269" key="7">
    <source>
    </source>
</evidence>
<evidence type="ECO:0000269" key="8">
    <source>
    </source>
</evidence>
<evidence type="ECO:0000269" key="9">
    <source>
    </source>
</evidence>
<evidence type="ECO:0000269" key="10">
    <source>
    </source>
</evidence>
<evidence type="ECO:0000269" key="11">
    <source>
    </source>
</evidence>
<evidence type="ECO:0000269" key="12">
    <source>
    </source>
</evidence>
<evidence type="ECO:0000303" key="13">
    <source>
    </source>
</evidence>
<evidence type="ECO:0000305" key="14"/>
<comment type="function">
    <text evidence="6 8 9 10 11 12">Laccase that catalyzes the oxidation of certain aromatic compounds, including L-dopa, to quinones, which then polymerize to melanin (PubMed:1100669, PubMed:6804444, PubMed:6807845, PubMed:8760791). Able to oxidize a wide variety of aromatic diphenol and diamino groups in the ortho, meta, and para positions but not monophenolic groups such as in phenol, tyramine, or tyrosine (PubMed:8300520). Plays an important role in virulence (PubMed:8760791). Plays a role in dissemination to extrapulmonary sites but is not involved in pulmonary growth or in elicitation of cellular immune responses in the lung (PubMed:14977977).</text>
</comment>
<comment type="catalytic activity">
    <reaction evidence="11">
        <text>4 hydroquinone + O2 = 4 benzosemiquinone + 2 H2O</text>
        <dbReference type="Rhea" id="RHEA:11276"/>
        <dbReference type="ChEBI" id="CHEBI:15377"/>
        <dbReference type="ChEBI" id="CHEBI:15379"/>
        <dbReference type="ChEBI" id="CHEBI:17594"/>
        <dbReference type="ChEBI" id="CHEBI:17977"/>
        <dbReference type="EC" id="1.10.3.2"/>
    </reaction>
</comment>
<comment type="cofactor">
    <cofactor evidence="11">
        <name>Cu cation</name>
        <dbReference type="ChEBI" id="CHEBI:23378"/>
    </cofactor>
    <text evidence="2">Binds 4 Cu cations per monomer.</text>
</comment>
<comment type="subcellular location">
    <subcellularLocation>
        <location evidence="7">Secreted</location>
    </subcellularLocation>
    <subcellularLocation>
        <location evidence="7">Secreted</location>
        <location evidence="7">Cell wall</location>
    </subcellularLocation>
</comment>
<comment type="induction">
    <text evidence="11 12">Expressed during infection of host (PubMed:8760791). Expression is repressed by glucose (PubMed:8300520).</text>
</comment>
<comment type="disruption phenotype">
    <text evidence="8 12">Decreases virulence in mice (PubMed:14977977, PubMed:8760791).</text>
</comment>
<comment type="similarity">
    <text evidence="14">Belongs to the multicopper oxidase family.</text>
</comment>
<gene>
    <name evidence="13" type="primary">LAC1</name>
    <name type="ordered locus">CNBG3550</name>
</gene>
<sequence>MRGLAKLFFLSCSFVSLVSSEKTDESPTAVSDNYMPKATATIDPSVFALSNDFEITDVPTTREYTFDIAKAFASPDGYEREVYVVNNMFPGPVIEANTGDTIIVHVNNHLDEGQSLHWHGLRQLGTAFMDGVPGITQCPIPPGGSFTYNFTVSHQSGTYWWHSHYSNSMADGIWGPLIVHSPNEPLQRGRDYDEDRIVFITDWMHDNSEIIIAALATPEGYKGNIAPPQGDAILINGRGQTNCTATGSSSCFYPPPPEIQVPVNCRVRLRFISATAHPMYRISIDNHPMEVVEADGTAVYGPTVHEISVAPGERYSAIINTNEGKEGDAFWLRTSVALSCMFGAVSQEGLAVVRYTGNGMVSTEEPQTSAWSDLAGVTVPCTGLDQTYTLSPRDSLSAPREPLQSHFFNSERGAFVNVLGNTFQGYGFNNISYQNQIFNPLLSIVQRGGSCENTLVSSRTFPDFGPGNIIINNLDTVIDHPYHLHGNEFQVIGRGTGALSIDNLTNIDFTLDNPVRKDTLWIQGGSWAVLRITADNPGVWALHCHIGWHLTEGKLAVIVVQPSAIGHMESPESWTNLCANTDPNAFGPAKRSSSPSIQSSKTSSFQYLREVKGKVVKRRGAREA</sequence>
<accession>Q55P57</accession>
<accession>Q9UQZ7</accession>
<dbReference type="EC" id="1.10.3.2" evidence="11"/>
<dbReference type="EMBL" id="AF140150">
    <property type="protein sequence ID" value="AAD49810.1"/>
    <property type="molecule type" value="Genomic_DNA"/>
</dbReference>
<dbReference type="EMBL" id="AF140151">
    <property type="protein sequence ID" value="AAD49811.1"/>
    <property type="molecule type" value="Genomic_DNA"/>
</dbReference>
<dbReference type="EMBL" id="AF140153">
    <property type="protein sequence ID" value="AAD49813.1"/>
    <property type="molecule type" value="Genomic_DNA"/>
</dbReference>
<dbReference type="EMBL" id="AF140156">
    <property type="protein sequence ID" value="AAD49816.1"/>
    <property type="molecule type" value="Genomic_DNA"/>
</dbReference>
<dbReference type="EMBL" id="AF140178">
    <property type="protein sequence ID" value="AAD49838.1"/>
    <property type="molecule type" value="Genomic_DNA"/>
</dbReference>
<dbReference type="EMBL" id="AAEY01000038">
    <property type="protein sequence ID" value="EAL19727.1"/>
    <property type="molecule type" value="Genomic_DNA"/>
</dbReference>
<dbReference type="PIR" id="A36962">
    <property type="entry name" value="A36962"/>
</dbReference>
<dbReference type="RefSeq" id="XP_774374.1">
    <property type="nucleotide sequence ID" value="XM_769281.1"/>
</dbReference>
<dbReference type="SMR" id="Q55P57"/>
<dbReference type="GlyCosmos" id="Q55P57">
    <property type="glycosylation" value="4 sites, No reported glycans"/>
</dbReference>
<dbReference type="GeneID" id="4937391"/>
<dbReference type="KEGG" id="cnb:CNBG3550"/>
<dbReference type="VEuPathDB" id="FungiDB:CNBG3550"/>
<dbReference type="HOGENOM" id="CLU_006504_7_1_1"/>
<dbReference type="OrthoDB" id="4810at5206"/>
<dbReference type="GO" id="GO:0005576">
    <property type="term" value="C:extracellular region"/>
    <property type="evidence" value="ECO:0007669"/>
    <property type="project" value="UniProtKB-SubCell"/>
</dbReference>
<dbReference type="GO" id="GO:0005507">
    <property type="term" value="F:copper ion binding"/>
    <property type="evidence" value="ECO:0007669"/>
    <property type="project" value="InterPro"/>
</dbReference>
<dbReference type="GO" id="GO:0052716">
    <property type="term" value="F:hydroquinone:oxygen oxidoreductase activity"/>
    <property type="evidence" value="ECO:0007669"/>
    <property type="project" value="UniProtKB-EC"/>
</dbReference>
<dbReference type="CDD" id="cd13857">
    <property type="entry name" value="CuRO_1_Diphenol_Ox"/>
    <property type="match status" value="1"/>
</dbReference>
<dbReference type="CDD" id="cd13883">
    <property type="entry name" value="CuRO_2_Diphenol_Ox"/>
    <property type="match status" value="1"/>
</dbReference>
<dbReference type="CDD" id="cd13904">
    <property type="entry name" value="CuRO_3_Diphenol_Ox"/>
    <property type="match status" value="1"/>
</dbReference>
<dbReference type="FunFam" id="2.60.40.420:FF:000045">
    <property type="entry name" value="Laccase 2"/>
    <property type="match status" value="1"/>
</dbReference>
<dbReference type="Gene3D" id="2.60.40.420">
    <property type="entry name" value="Cupredoxins - blue copper proteins"/>
    <property type="match status" value="3"/>
</dbReference>
<dbReference type="InterPro" id="IPR011707">
    <property type="entry name" value="Cu-oxidase-like_N"/>
</dbReference>
<dbReference type="InterPro" id="IPR001117">
    <property type="entry name" value="Cu-oxidase_2nd"/>
</dbReference>
<dbReference type="InterPro" id="IPR011706">
    <property type="entry name" value="Cu-oxidase_C"/>
</dbReference>
<dbReference type="InterPro" id="IPR045087">
    <property type="entry name" value="Cu-oxidase_fam"/>
</dbReference>
<dbReference type="InterPro" id="IPR008972">
    <property type="entry name" value="Cupredoxin"/>
</dbReference>
<dbReference type="PANTHER" id="PTHR11709:SF414">
    <property type="entry name" value="ADR239WP"/>
    <property type="match status" value="1"/>
</dbReference>
<dbReference type="PANTHER" id="PTHR11709">
    <property type="entry name" value="MULTI-COPPER OXIDASE"/>
    <property type="match status" value="1"/>
</dbReference>
<dbReference type="Pfam" id="PF00394">
    <property type="entry name" value="Cu-oxidase"/>
    <property type="match status" value="1"/>
</dbReference>
<dbReference type="Pfam" id="PF07731">
    <property type="entry name" value="Cu-oxidase_2"/>
    <property type="match status" value="1"/>
</dbReference>
<dbReference type="Pfam" id="PF07732">
    <property type="entry name" value="Cu-oxidase_3"/>
    <property type="match status" value="1"/>
</dbReference>
<dbReference type="SUPFAM" id="SSF49503">
    <property type="entry name" value="Cupredoxins"/>
    <property type="match status" value="3"/>
</dbReference>
<keyword id="KW-0134">Cell wall</keyword>
<keyword id="KW-0186">Copper</keyword>
<keyword id="KW-0903">Direct protein sequencing</keyword>
<keyword id="KW-1015">Disulfide bond</keyword>
<keyword id="KW-0325">Glycoprotein</keyword>
<keyword id="KW-0479">Metal-binding</keyword>
<keyword id="KW-0560">Oxidoreductase</keyword>
<keyword id="KW-0677">Repeat</keyword>
<keyword id="KW-0964">Secreted</keyword>
<keyword id="KW-0732">Signal</keyword>
<reference key="1">
    <citation type="journal article" date="1994" name="J. Bacteriol.">
        <title>Biochemical and molecular characterization of the diphenol oxidase of Cryptococcus neoformans: identification as a laccase.</title>
        <authorList>
            <person name="Williamson P.R."/>
        </authorList>
    </citation>
    <scope>NUCLEOTIDE SEQUENCE [GENOMIC DNA]</scope>
    <scope>PROTEIN SEQUENCE OF 21-37; 240-248; 282-313 AND 325-332</scope>
    <scope>FUNCTION</scope>
    <scope>CATALYTIC ACTIVITY</scope>
    <scope>COFACTOR</scope>
    <scope>INDUCTION</scope>
    <source>
        <strain>B-3501A</strain>
    </source>
</reference>
<reference key="2">
    <citation type="journal article" date="2005" name="Science">
        <title>The genome of the basidiomycetous yeast and human pathogen Cryptococcus neoformans.</title>
        <authorList>
            <person name="Loftus B.J."/>
            <person name="Fung E."/>
            <person name="Roncaglia P."/>
            <person name="Rowley D."/>
            <person name="Amedeo P."/>
            <person name="Bruno D."/>
            <person name="Vamathevan J."/>
            <person name="Miranda M."/>
            <person name="Anderson I.J."/>
            <person name="Fraser J.A."/>
            <person name="Allen J.E."/>
            <person name="Bosdet I.E."/>
            <person name="Brent M.R."/>
            <person name="Chiu R."/>
            <person name="Doering T.L."/>
            <person name="Donlin M.J."/>
            <person name="D'Souza C.A."/>
            <person name="Fox D.S."/>
            <person name="Grinberg V."/>
            <person name="Fu J."/>
            <person name="Fukushima M."/>
            <person name="Haas B.J."/>
            <person name="Huang J.C."/>
            <person name="Janbon G."/>
            <person name="Jones S.J.M."/>
            <person name="Koo H.L."/>
            <person name="Krzywinski M.I."/>
            <person name="Kwon-Chung K.J."/>
            <person name="Lengeler K.B."/>
            <person name="Maiti R."/>
            <person name="Marra M.A."/>
            <person name="Marra R.E."/>
            <person name="Mathewson C.A."/>
            <person name="Mitchell T.G."/>
            <person name="Pertea M."/>
            <person name="Riggs F.R."/>
            <person name="Salzberg S.L."/>
            <person name="Schein J.E."/>
            <person name="Shvartsbeyn A."/>
            <person name="Shin H."/>
            <person name="Shumway M."/>
            <person name="Specht C.A."/>
            <person name="Suh B.B."/>
            <person name="Tenney A."/>
            <person name="Utterback T.R."/>
            <person name="Wickes B.L."/>
            <person name="Wortman J.R."/>
            <person name="Wye N.H."/>
            <person name="Kronstad J.W."/>
            <person name="Lodge J.K."/>
            <person name="Heitman J."/>
            <person name="Davis R.W."/>
            <person name="Fraser C.M."/>
            <person name="Hyman R.W."/>
        </authorList>
    </citation>
    <scope>NUCLEOTIDE SEQUENCE [LARGE SCALE GENOMIC DNA]</scope>
    <source>
        <strain>B-3501A</strain>
    </source>
</reference>
<reference key="3">
    <citation type="journal article" date="2000" name="Mol. Ecol.">
        <title>Multiple gene genealogies reveal recent dispersion and hybridization in the human pathogenic fungus Cryptococcus neoformans.</title>
        <authorList>
            <person name="Xu J."/>
            <person name="Vilgalys R."/>
            <person name="Mitchell T.G."/>
        </authorList>
    </citation>
    <scope>NUCLEOTIDE SEQUENCE [GENOMIC DNA] OF 118-210</scope>
</reference>
<reference key="4">
    <citation type="journal article" date="1975" name="J. Clin. Microbiol.">
        <title>Pigment production by Cryptococcus neoformans from para- and ortho-Diphenols: effect of the nitrogen source.</title>
        <authorList>
            <person name="Chaskes S."/>
            <person name="Tyndall R.L."/>
        </authorList>
    </citation>
    <scope>FUNCTION</scope>
</reference>
<reference key="5">
    <citation type="journal article" date="1982" name="Infect. Immun.">
        <title>Phenoloxidase activity and virulence in isogenic strains of Cryptococcus neoformans.</title>
        <authorList>
            <person name="Rhodes J.C."/>
            <person name="Polacheck I."/>
            <person name="Kwon-Chung K.J."/>
        </authorList>
    </citation>
    <scope>FUNCTION</scope>
</reference>
<reference key="6">
    <citation type="journal article" date="1982" name="J. Bacteriol.">
        <title>Melanin-lacking mutants of Cryptococcus neoformans and their virulence for mice.</title>
        <authorList>
            <person name="Kwon-Chung K.J."/>
            <person name="Polacheck I."/>
            <person name="Popkin T.J."/>
        </authorList>
    </citation>
    <scope>FUNCTION</scope>
</reference>
<reference key="7">
    <citation type="journal article" date="1996" name="J. Exp. Med.">
        <title>Effect of the laccase gene CNLAC1, on virulence of Cryptococcus neoformans.</title>
        <authorList>
            <person name="Salas S.D."/>
            <person name="Bennett J.E."/>
            <person name="Kwon-Chung K.J."/>
            <person name="Perfect J.R."/>
            <person name="Williamson P.R."/>
        </authorList>
    </citation>
    <scope>INDUCTION</scope>
    <scope>DISRUPTION PHENOTYPE</scope>
    <scope>FUNCTION</scope>
    <scope>MUTAGENESIS OF HIS-164</scope>
</reference>
<reference key="8">
    <citation type="journal article" date="2001" name="Infect. Immun.">
        <title>Laccase of Cryptococcus neoformans is a cell wall-associated virulence factor.</title>
        <authorList>
            <person name="Zhu X."/>
            <person name="Gibbons J."/>
            <person name="Garcia-Rivera J."/>
            <person name="Casadevall A."/>
            <person name="Williamson P.R."/>
        </authorList>
    </citation>
    <scope>SUBCELLULAR LOCATION</scope>
</reference>
<reference key="9">
    <citation type="journal article" date="2004" name="Infect. Immun.">
        <title>CNLAC1 is required for extrapulmonary dissemination of Cryptococcus neoformans but not pulmonary persistence.</title>
        <authorList>
            <person name="Noverr M.C."/>
            <person name="Williamson P.R."/>
            <person name="Fajardo R.S."/>
            <person name="Huffnagle G.B."/>
        </authorList>
    </citation>
    <scope>FUNCTION</scope>
    <scope>DISRUPTION PHENOTYPE</scope>
</reference>
<reference key="10">
    <citation type="journal article" date="2004" name="FEMS Yeast Res.">
        <title>Role of laccase in the biology and virulence of Cryptococcus neoformans.</title>
        <authorList>
            <person name="Zhu X."/>
            <person name="Williamson P.R."/>
        </authorList>
    </citation>
    <scope>REVIEW</scope>
</reference>
<feature type="signal peptide" evidence="11">
    <location>
        <begin position="1"/>
        <end position="20"/>
    </location>
</feature>
<feature type="chain" id="PRO_5004250357" description="Laccase-1" evidence="3">
    <location>
        <begin position="21"/>
        <end position="624"/>
    </location>
</feature>
<feature type="domain" description="Plastocyanin-like 1" evidence="3">
    <location>
        <begin position="72"/>
        <end position="183"/>
    </location>
</feature>
<feature type="domain" description="Plastocyanin-like 2" evidence="3">
    <location>
        <begin position="195"/>
        <end position="343"/>
    </location>
</feature>
<feature type="domain" description="Plastocyanin-like 3" evidence="3">
    <location>
        <begin position="469"/>
        <end position="562"/>
    </location>
</feature>
<feature type="region of interest" description="Disordered" evidence="5">
    <location>
        <begin position="579"/>
        <end position="604"/>
    </location>
</feature>
<feature type="compositionally biased region" description="Low complexity" evidence="5">
    <location>
        <begin position="592"/>
        <end position="604"/>
    </location>
</feature>
<feature type="binding site" description="type 2 copper site" evidence="1">
    <location>
        <position position="117"/>
    </location>
    <ligand>
        <name>Cu cation</name>
        <dbReference type="ChEBI" id="CHEBI:23378"/>
        <label>1</label>
    </ligand>
</feature>
<feature type="binding site" description="type 3 copper site" evidence="1">
    <location>
        <position position="119"/>
    </location>
    <ligand>
        <name>Cu cation</name>
        <dbReference type="ChEBI" id="CHEBI:23378"/>
        <label>2</label>
    </ligand>
</feature>
<feature type="binding site" description="type 3 copper site" evidence="1">
    <location>
        <position position="162"/>
    </location>
    <ligand>
        <name>Cu cation</name>
        <dbReference type="ChEBI" id="CHEBI:23378"/>
        <label>2</label>
    </ligand>
</feature>
<feature type="binding site" description="type 3 copper site" evidence="1">
    <location>
        <position position="164"/>
    </location>
    <ligand>
        <name>Cu cation</name>
        <dbReference type="ChEBI" id="CHEBI:23378"/>
        <label>3</label>
    </ligand>
</feature>
<feature type="binding site" description="type 1 copper site" evidence="1">
    <location>
        <position position="480"/>
    </location>
    <ligand>
        <name>Cu cation</name>
        <dbReference type="ChEBI" id="CHEBI:23378"/>
        <label>4</label>
    </ligand>
</feature>
<feature type="binding site" description="type 2 copper site" evidence="1">
    <location>
        <position position="483"/>
    </location>
    <ligand>
        <name>Cu cation</name>
        <dbReference type="ChEBI" id="CHEBI:23378"/>
        <label>1</label>
    </ligand>
</feature>
<feature type="binding site" description="type 3 copper site" evidence="1">
    <location>
        <position position="485"/>
    </location>
    <ligand>
        <name>Cu cation</name>
        <dbReference type="ChEBI" id="CHEBI:23378"/>
        <label>3</label>
    </ligand>
</feature>
<feature type="binding site" description="type 3 copper site" evidence="1">
    <location>
        <position position="543"/>
    </location>
    <ligand>
        <name>Cu cation</name>
        <dbReference type="ChEBI" id="CHEBI:23378"/>
        <label>3</label>
    </ligand>
</feature>
<feature type="binding site" description="type 1 copper site" evidence="1">
    <location>
        <position position="544"/>
    </location>
    <ligand>
        <name>Cu cation</name>
        <dbReference type="ChEBI" id="CHEBI:23378"/>
        <label>4</label>
    </ligand>
</feature>
<feature type="binding site" description="type 3 copper site" evidence="1">
    <location>
        <position position="545"/>
    </location>
    <ligand>
        <name>Cu cation</name>
        <dbReference type="ChEBI" id="CHEBI:23378"/>
        <label>2</label>
    </ligand>
</feature>
<feature type="binding site" description="type 1 copper site" evidence="1">
    <location>
        <position position="549"/>
    </location>
    <ligand>
        <name>Cu cation</name>
        <dbReference type="ChEBI" id="CHEBI:23378"/>
        <label>4</label>
    </ligand>
</feature>
<feature type="glycosylation site" description="N-linked (GlcNAc...) asparagine" evidence="4">
    <location>
        <position position="149"/>
    </location>
</feature>
<feature type="glycosylation site" description="N-linked (GlcNAc...) asparagine" evidence="4">
    <location>
        <position position="242"/>
    </location>
</feature>
<feature type="glycosylation site" description="N-linked (GlcNAc...) asparagine" evidence="4">
    <location>
        <position position="430"/>
    </location>
</feature>
<feature type="glycosylation site" description="N-linked (GlcNAc...) asparagine" evidence="4">
    <location>
        <position position="503"/>
    </location>
</feature>
<feature type="disulfide bond" evidence="2">
    <location>
        <begin position="138"/>
        <end position="578"/>
    </location>
</feature>
<feature type="mutagenesis site" description="In mel2; impairs melanin production and decreases virulence." evidence="12">
    <original>H</original>
    <variation>Y</variation>
    <location>
        <position position="164"/>
    </location>
</feature>
<organism>
    <name type="scientific">Cryptococcus neoformans var. neoformans serotype D (strain B-3501A)</name>
    <name type="common">Filobasidiella neoformans</name>
    <dbReference type="NCBI Taxonomy" id="283643"/>
    <lineage>
        <taxon>Eukaryota</taxon>
        <taxon>Fungi</taxon>
        <taxon>Dikarya</taxon>
        <taxon>Basidiomycota</taxon>
        <taxon>Agaricomycotina</taxon>
        <taxon>Tremellomycetes</taxon>
        <taxon>Tremellales</taxon>
        <taxon>Cryptococcaceae</taxon>
        <taxon>Cryptococcus</taxon>
        <taxon>Cryptococcus neoformans species complex</taxon>
    </lineage>
</organism>
<name>LAC1_CRYNB</name>
<proteinExistence type="evidence at protein level"/>
<protein>
    <recommendedName>
        <fullName evidence="14">Laccase-1</fullName>
        <ecNumber evidence="11">1.10.3.2</ecNumber>
    </recommendedName>
    <alternativeName>
        <fullName evidence="13">Diphenol oxidase 1</fullName>
    </alternativeName>
</protein>